<keyword id="KW-0067">ATP-binding</keyword>
<keyword id="KW-0418">Kinase</keyword>
<keyword id="KW-0460">Magnesium</keyword>
<keyword id="KW-0479">Metal-binding</keyword>
<keyword id="KW-0511">Multifunctional enzyme</keyword>
<keyword id="KW-0547">Nucleotide-binding</keyword>
<keyword id="KW-0723">Serine/threonine-protein kinase</keyword>
<keyword id="KW-0808">Transferase</keyword>
<gene>
    <name evidence="1" type="primary">hprK</name>
    <name type="ordered locus">Clim_0613</name>
</gene>
<name>HPRK_CHLL2</name>
<evidence type="ECO:0000255" key="1">
    <source>
        <dbReference type="HAMAP-Rule" id="MF_01249"/>
    </source>
</evidence>
<proteinExistence type="inferred from homology"/>
<accession>B3EH20</accession>
<organism>
    <name type="scientific">Chlorobium limicola (strain DSM 245 / NBRC 103803 / 6330)</name>
    <dbReference type="NCBI Taxonomy" id="290315"/>
    <lineage>
        <taxon>Bacteria</taxon>
        <taxon>Pseudomonadati</taxon>
        <taxon>Chlorobiota</taxon>
        <taxon>Chlorobiia</taxon>
        <taxon>Chlorobiales</taxon>
        <taxon>Chlorobiaceae</taxon>
        <taxon>Chlorobium/Pelodictyon group</taxon>
        <taxon>Chlorobium</taxon>
    </lineage>
</organism>
<comment type="function">
    <text evidence="1">Catalyzes the ATP- as well as the pyrophosphate-dependent phosphorylation of a specific serine residue in HPr, a phosphocarrier protein of the phosphoenolpyruvate-dependent sugar phosphotransferase system (PTS). HprK/P also catalyzes the pyrophosphate-producing, inorganic phosphate-dependent dephosphorylation (phosphorolysis) of seryl-phosphorylated HPr (P-Ser-HPr).</text>
</comment>
<comment type="catalytic activity">
    <reaction evidence="1">
        <text>[HPr protein]-L-serine + ATP = [HPr protein]-O-phospho-L-serine + ADP + H(+)</text>
        <dbReference type="Rhea" id="RHEA:46600"/>
        <dbReference type="Rhea" id="RHEA-COMP:11602"/>
        <dbReference type="Rhea" id="RHEA-COMP:11603"/>
        <dbReference type="ChEBI" id="CHEBI:15378"/>
        <dbReference type="ChEBI" id="CHEBI:29999"/>
        <dbReference type="ChEBI" id="CHEBI:30616"/>
        <dbReference type="ChEBI" id="CHEBI:83421"/>
        <dbReference type="ChEBI" id="CHEBI:456216"/>
    </reaction>
</comment>
<comment type="catalytic activity">
    <reaction evidence="1">
        <text>[HPr protein]-O-phospho-L-serine + phosphate + H(+) = [HPr protein]-L-serine + diphosphate</text>
        <dbReference type="Rhea" id="RHEA:46604"/>
        <dbReference type="Rhea" id="RHEA-COMP:11602"/>
        <dbReference type="Rhea" id="RHEA-COMP:11603"/>
        <dbReference type="ChEBI" id="CHEBI:15378"/>
        <dbReference type="ChEBI" id="CHEBI:29999"/>
        <dbReference type="ChEBI" id="CHEBI:33019"/>
        <dbReference type="ChEBI" id="CHEBI:43474"/>
        <dbReference type="ChEBI" id="CHEBI:83421"/>
    </reaction>
</comment>
<comment type="cofactor">
    <cofactor evidence="1">
        <name>Mg(2+)</name>
        <dbReference type="ChEBI" id="CHEBI:18420"/>
    </cofactor>
</comment>
<comment type="subunit">
    <text evidence="1">Homohexamer.</text>
</comment>
<comment type="domain">
    <text evidence="1">The Walker A ATP-binding motif also binds Pi and PPi.</text>
</comment>
<comment type="miscellaneous">
    <text evidence="1">Both phosphorylation and phosphorolysis are carried out by the same active site and suggest a common mechanism for both reactions.</text>
</comment>
<comment type="similarity">
    <text evidence="1">Belongs to the HPrK/P family.</text>
</comment>
<feature type="chain" id="PRO_1000139894" description="HPr kinase/phosphorylase">
    <location>
        <begin position="1"/>
        <end position="330"/>
    </location>
</feature>
<feature type="region of interest" description="Important for the catalytic mechanism of both phosphorylation and dephosphorylation" evidence="1">
    <location>
        <begin position="217"/>
        <end position="226"/>
    </location>
</feature>
<feature type="region of interest" description="Important for the catalytic mechanism of dephosphorylation" evidence="1">
    <location>
        <begin position="280"/>
        <end position="285"/>
    </location>
</feature>
<feature type="active site" evidence="1">
    <location>
        <position position="153"/>
    </location>
</feature>
<feature type="active site" evidence="1">
    <location>
        <position position="174"/>
    </location>
</feature>
<feature type="active site" description="Proton acceptor; for phosphorylation activity. Proton donor; for dephosphorylation activity" evidence="1">
    <location>
        <position position="192"/>
    </location>
</feature>
<feature type="active site" evidence="1">
    <location>
        <position position="259"/>
    </location>
</feature>
<feature type="binding site" evidence="1">
    <location>
        <begin position="168"/>
        <end position="175"/>
    </location>
    <ligand>
        <name>ATP</name>
        <dbReference type="ChEBI" id="CHEBI:30616"/>
    </ligand>
</feature>
<feature type="binding site" evidence="1">
    <location>
        <position position="175"/>
    </location>
    <ligand>
        <name>Mg(2+)</name>
        <dbReference type="ChEBI" id="CHEBI:18420"/>
    </ligand>
</feature>
<feature type="binding site" evidence="1">
    <location>
        <position position="218"/>
    </location>
    <ligand>
        <name>Mg(2+)</name>
        <dbReference type="ChEBI" id="CHEBI:18420"/>
    </ligand>
</feature>
<sequence length="330" mass="37601">MNFDQKGMKKRSITVAYFFENIGRNHDIKLRRLNRVDEQKRRISERELHRPGLALAGFTNLFTYKRVQILGNTETRFLNNHDEAERRKAFENLVRFKVPCIILTSTNKLQPELLEMATEAGVPVYATRHSSTKAMYLITDFLDDQFSLHQQYHGSMVDVCGVGVLLTGKSGLGKSEIALDLIERGHGLVADDVVIIRRKGESLVLNARRNDIIDHFMEIRGLGVVDVKANFGIRAIRDIKDVQVVVELLEWNRETDYERLGLDMKSIKILGVEVPLVQLPIFPGKNIAVIIEVVALNFLLKHYSNYVAAEALTERIRTSIDKGNEQDDES</sequence>
<reference key="1">
    <citation type="submission" date="2008-05" db="EMBL/GenBank/DDBJ databases">
        <title>Complete sequence of Chlorobium limicola DSM 245.</title>
        <authorList>
            <consortium name="US DOE Joint Genome Institute"/>
            <person name="Lucas S."/>
            <person name="Copeland A."/>
            <person name="Lapidus A."/>
            <person name="Glavina del Rio T."/>
            <person name="Dalin E."/>
            <person name="Tice H."/>
            <person name="Bruce D."/>
            <person name="Goodwin L."/>
            <person name="Pitluck S."/>
            <person name="Schmutz J."/>
            <person name="Larimer F."/>
            <person name="Land M."/>
            <person name="Hauser L."/>
            <person name="Kyrpides N."/>
            <person name="Ovchinnikova G."/>
            <person name="Zhao F."/>
            <person name="Li T."/>
            <person name="Liu Z."/>
            <person name="Overmann J."/>
            <person name="Bryant D.A."/>
            <person name="Richardson P."/>
        </authorList>
    </citation>
    <scope>NUCLEOTIDE SEQUENCE [LARGE SCALE GENOMIC DNA]</scope>
    <source>
        <strain>DSM 245 / NBRC 103803 / 6330</strain>
    </source>
</reference>
<dbReference type="EC" id="2.7.11.-" evidence="1"/>
<dbReference type="EC" id="2.7.4.-" evidence="1"/>
<dbReference type="EMBL" id="CP001097">
    <property type="protein sequence ID" value="ACD89700.1"/>
    <property type="molecule type" value="Genomic_DNA"/>
</dbReference>
<dbReference type="RefSeq" id="WP_012465581.1">
    <property type="nucleotide sequence ID" value="NC_010803.1"/>
</dbReference>
<dbReference type="SMR" id="B3EH20"/>
<dbReference type="STRING" id="290315.Clim_0613"/>
<dbReference type="KEGG" id="cli:Clim_0613"/>
<dbReference type="eggNOG" id="COG1493">
    <property type="taxonomic scope" value="Bacteria"/>
</dbReference>
<dbReference type="HOGENOM" id="CLU_052030_0_1_10"/>
<dbReference type="OrthoDB" id="9778803at2"/>
<dbReference type="Proteomes" id="UP000008841">
    <property type="component" value="Chromosome"/>
</dbReference>
<dbReference type="GO" id="GO:0005524">
    <property type="term" value="F:ATP binding"/>
    <property type="evidence" value="ECO:0007669"/>
    <property type="project" value="UniProtKB-UniRule"/>
</dbReference>
<dbReference type="GO" id="GO:0000287">
    <property type="term" value="F:magnesium ion binding"/>
    <property type="evidence" value="ECO:0007669"/>
    <property type="project" value="UniProtKB-UniRule"/>
</dbReference>
<dbReference type="GO" id="GO:0000155">
    <property type="term" value="F:phosphorelay sensor kinase activity"/>
    <property type="evidence" value="ECO:0007669"/>
    <property type="project" value="InterPro"/>
</dbReference>
<dbReference type="GO" id="GO:0004674">
    <property type="term" value="F:protein serine/threonine kinase activity"/>
    <property type="evidence" value="ECO:0007669"/>
    <property type="project" value="UniProtKB-KW"/>
</dbReference>
<dbReference type="GO" id="GO:0004712">
    <property type="term" value="F:protein serine/threonine/tyrosine kinase activity"/>
    <property type="evidence" value="ECO:0007669"/>
    <property type="project" value="UniProtKB-UniRule"/>
</dbReference>
<dbReference type="GO" id="GO:0006109">
    <property type="term" value="P:regulation of carbohydrate metabolic process"/>
    <property type="evidence" value="ECO:0007669"/>
    <property type="project" value="UniProtKB-UniRule"/>
</dbReference>
<dbReference type="CDD" id="cd01918">
    <property type="entry name" value="HprK_C"/>
    <property type="match status" value="1"/>
</dbReference>
<dbReference type="Gene3D" id="3.40.1390.20">
    <property type="entry name" value="HprK N-terminal domain-like"/>
    <property type="match status" value="1"/>
</dbReference>
<dbReference type="Gene3D" id="3.40.50.300">
    <property type="entry name" value="P-loop containing nucleotide triphosphate hydrolases"/>
    <property type="match status" value="1"/>
</dbReference>
<dbReference type="HAMAP" id="MF_01249">
    <property type="entry name" value="HPr_kinase"/>
    <property type="match status" value="1"/>
</dbReference>
<dbReference type="InterPro" id="IPR003755">
    <property type="entry name" value="HPr(Ser)_kin/Pase"/>
</dbReference>
<dbReference type="InterPro" id="IPR011104">
    <property type="entry name" value="Hpr_kin/Pase_C"/>
</dbReference>
<dbReference type="InterPro" id="IPR011126">
    <property type="entry name" value="Hpr_kin/Pase_Hpr_N"/>
</dbReference>
<dbReference type="InterPro" id="IPR027417">
    <property type="entry name" value="P-loop_NTPase"/>
</dbReference>
<dbReference type="InterPro" id="IPR028979">
    <property type="entry name" value="Ser_kin/Pase_Hpr-like_N_sf"/>
</dbReference>
<dbReference type="NCBIfam" id="TIGR00679">
    <property type="entry name" value="hpr-ser"/>
    <property type="match status" value="1"/>
</dbReference>
<dbReference type="PANTHER" id="PTHR30305:SF1">
    <property type="entry name" value="HPR KINASE_PHOSPHORYLASE"/>
    <property type="match status" value="1"/>
</dbReference>
<dbReference type="PANTHER" id="PTHR30305">
    <property type="entry name" value="PROTEIN YJDM-RELATED"/>
    <property type="match status" value="1"/>
</dbReference>
<dbReference type="Pfam" id="PF07475">
    <property type="entry name" value="Hpr_kinase_C"/>
    <property type="match status" value="1"/>
</dbReference>
<dbReference type="Pfam" id="PF02603">
    <property type="entry name" value="Hpr_kinase_N"/>
    <property type="match status" value="1"/>
</dbReference>
<dbReference type="SUPFAM" id="SSF75138">
    <property type="entry name" value="HprK N-terminal domain-like"/>
    <property type="match status" value="1"/>
</dbReference>
<dbReference type="SUPFAM" id="SSF53795">
    <property type="entry name" value="PEP carboxykinase-like"/>
    <property type="match status" value="1"/>
</dbReference>
<protein>
    <recommendedName>
        <fullName evidence="1">HPr kinase/phosphorylase</fullName>
        <shortName evidence="1">HPrK/P</shortName>
        <ecNumber evidence="1">2.7.11.-</ecNumber>
        <ecNumber evidence="1">2.7.4.-</ecNumber>
    </recommendedName>
    <alternativeName>
        <fullName evidence="1">HPr(Ser) kinase/phosphorylase</fullName>
    </alternativeName>
</protein>